<organism>
    <name type="scientific">Arabidopsis thaliana</name>
    <name type="common">Mouse-ear cress</name>
    <dbReference type="NCBI Taxonomy" id="3702"/>
    <lineage>
        <taxon>Eukaryota</taxon>
        <taxon>Viridiplantae</taxon>
        <taxon>Streptophyta</taxon>
        <taxon>Embryophyta</taxon>
        <taxon>Tracheophyta</taxon>
        <taxon>Spermatophyta</taxon>
        <taxon>Magnoliopsida</taxon>
        <taxon>eudicotyledons</taxon>
        <taxon>Gunneridae</taxon>
        <taxon>Pentapetalae</taxon>
        <taxon>rosids</taxon>
        <taxon>malvids</taxon>
        <taxon>Brassicales</taxon>
        <taxon>Brassicaceae</taxon>
        <taxon>Camelineae</taxon>
        <taxon>Arabidopsis</taxon>
    </lineage>
</organism>
<gene>
    <name type="primary">CYP86A1</name>
    <name type="synonym">CYP86</name>
    <name type="synonym">HORST</name>
    <name type="ordered locus">At5g58860</name>
    <name type="ORF">K19M22.6</name>
</gene>
<proteinExistence type="evidence at protein level"/>
<sequence>MEALNSILTGYAVAALSVYALWFYFLSRRLTGPKVLPFVGSLPYLIANRSRIHDWIADNLRATGGTYQTCTMVIPFVAKAQGFYTVTCHPKNVEHILKTRFDNYPKGPMWRAAFHDLLGQGIFNSDGDTWLMQRKTAALEFTTRTLRQAMARWVNGTIKNRLWLILDRAVQNNKPVDLQDLFLRLTFDNICGLTFGKDPETLSLDLPDNPFSVAFDTATEATLKRLLYTGFLWRIQKAMGIGSEDKLKKSLEVVETYMNDAIDARKNSPSDDLLSRFLKKRDVNGNVLPTDVLQRIALNFVLAGRDTSSVALSWFFWLVMNNREVETKIVNELSMVLKETRGNDQEKWTEEPLEFDEADRLVYLKAALAETLRLYPSVPQDFKYVVDDDVLPDGTFVPRGSTVTYSIYSIGRMKTIWGEDCLEFRPERWLTADGERFETPKDGYKFVAFNAGPRTCLGKDLAYNQMKSVASAVLLRYRVFPVPGHRVEQKMSLTLFMKNGLRVYLQPRGEVLA</sequence>
<keyword id="KW-0349">Heme</keyword>
<keyword id="KW-0408">Iron</keyword>
<keyword id="KW-0472">Membrane</keyword>
<keyword id="KW-0479">Metal-binding</keyword>
<keyword id="KW-0503">Monooxygenase</keyword>
<keyword id="KW-0521">NADP</keyword>
<keyword id="KW-0560">Oxidoreductase</keyword>
<keyword id="KW-1185">Reference proteome</keyword>
<keyword id="KW-0812">Transmembrane</keyword>
<keyword id="KW-1133">Transmembrane helix</keyword>
<comment type="function">
    <text evidence="3 4 5">Catalyzes the omega-hydroxylation of various fatty acids (FA). Acts on saturated and unsaturated fatty acids with chain lengths from C12 to C18 but not on hexadecane.</text>
</comment>
<comment type="catalytic activity">
    <reaction evidence="5">
        <text>an omega-methyl-long-chain fatty acid + reduced [NADPH--hemoprotein reductase] + O2 = an omega-hydroxy-long-chain fatty acid + oxidized [NADPH--hemoprotein reductase] + H2O + H(+)</text>
        <dbReference type="Rhea" id="RHEA:56748"/>
        <dbReference type="Rhea" id="RHEA-COMP:11964"/>
        <dbReference type="Rhea" id="RHEA-COMP:11965"/>
        <dbReference type="ChEBI" id="CHEBI:15377"/>
        <dbReference type="ChEBI" id="CHEBI:15378"/>
        <dbReference type="ChEBI" id="CHEBI:15379"/>
        <dbReference type="ChEBI" id="CHEBI:57618"/>
        <dbReference type="ChEBI" id="CHEBI:58210"/>
        <dbReference type="ChEBI" id="CHEBI:140991"/>
        <dbReference type="ChEBI" id="CHEBI:140992"/>
        <dbReference type="EC" id="1.14.14.80"/>
    </reaction>
</comment>
<comment type="cofactor">
    <cofactor evidence="1">
        <name>heme</name>
        <dbReference type="ChEBI" id="CHEBI:30413"/>
    </cofactor>
</comment>
<comment type="subcellular location">
    <subcellularLocation>
        <location evidence="6">Membrane</location>
        <topology evidence="6">Single-pass membrane protein</topology>
    </subcellularLocation>
</comment>
<comment type="tissue specificity">
    <text evidence="3">Expressed in roots.</text>
</comment>
<comment type="induction">
    <text evidence="3">By abscisic acid (ABA), the ethylene precursor ACC, mannitol or cold treatment. Down-regulated by auxin and salicylic acid (SA).</text>
</comment>
<comment type="similarity">
    <text evidence="6">Belongs to the cytochrome P450 family.</text>
</comment>
<feature type="chain" id="PRO_0000052175" description="Cytochrome P450 86A1">
    <location>
        <begin position="1"/>
        <end position="513"/>
    </location>
</feature>
<feature type="transmembrane region" description="Helical" evidence="2">
    <location>
        <begin position="7"/>
        <end position="27"/>
    </location>
</feature>
<feature type="binding site" description="axial binding residue" evidence="1">
    <location>
        <position position="456"/>
    </location>
    <ligand>
        <name>heme</name>
        <dbReference type="ChEBI" id="CHEBI:30413"/>
    </ligand>
    <ligandPart>
        <name>Fe</name>
        <dbReference type="ChEBI" id="CHEBI:18248"/>
    </ligandPart>
</feature>
<feature type="sequence conflict" description="In Ref. 5; AAL91155/AAO29963." evidence="6" ref="5">
    <original>M</original>
    <variation>K</variation>
    <location>
        <position position="335"/>
    </location>
</feature>
<feature type="sequence conflict" description="In Ref. 1; CAA62082 and 2; no nucleotide entry." evidence="6" ref="1 2">
    <original>DD</original>
    <variation>EH</variation>
    <location>
        <begin position="387"/>
        <end position="388"/>
    </location>
</feature>
<accession>P48422</accession>
<accession>Q8RXG6</accession>
<accession>Q9FIM3</accession>
<dbReference type="EC" id="1.14.14.80" evidence="5"/>
<dbReference type="EMBL" id="X90458">
    <property type="protein sequence ID" value="CAA62082.1"/>
    <property type="molecule type" value="mRNA"/>
</dbReference>
<dbReference type="EMBL" id="AB016885">
    <property type="protein sequence ID" value="BAB09631.1"/>
    <property type="molecule type" value="Genomic_DNA"/>
</dbReference>
<dbReference type="EMBL" id="CP002688">
    <property type="protein sequence ID" value="AED97111.1"/>
    <property type="molecule type" value="Genomic_DNA"/>
</dbReference>
<dbReference type="EMBL" id="AY081266">
    <property type="protein sequence ID" value="AAL91155.1"/>
    <property type="molecule type" value="mRNA"/>
</dbReference>
<dbReference type="EMBL" id="BT003345">
    <property type="protein sequence ID" value="AAO29963.1"/>
    <property type="molecule type" value="mRNA"/>
</dbReference>
<dbReference type="PIR" id="JC5965">
    <property type="entry name" value="JC5965"/>
</dbReference>
<dbReference type="RefSeq" id="NP_200694.1">
    <property type="nucleotide sequence ID" value="NM_125276.3"/>
</dbReference>
<dbReference type="SMR" id="P48422"/>
<dbReference type="FunCoup" id="P48422">
    <property type="interactions" value="230"/>
</dbReference>
<dbReference type="STRING" id="3702.P48422"/>
<dbReference type="PaxDb" id="3702-AT5G58860.1"/>
<dbReference type="ProteomicsDB" id="240455"/>
<dbReference type="EnsemblPlants" id="AT5G58860.1">
    <property type="protein sequence ID" value="AT5G58860.1"/>
    <property type="gene ID" value="AT5G58860"/>
</dbReference>
<dbReference type="GeneID" id="836003"/>
<dbReference type="Gramene" id="AT5G58860.1">
    <property type="protein sequence ID" value="AT5G58860.1"/>
    <property type="gene ID" value="AT5G58860"/>
</dbReference>
<dbReference type="KEGG" id="ath:AT5G58860"/>
<dbReference type="Araport" id="AT5G58860"/>
<dbReference type="TAIR" id="AT5G58860">
    <property type="gene designation" value="CYP86A1"/>
</dbReference>
<dbReference type="eggNOG" id="KOG0157">
    <property type="taxonomic scope" value="Eukaryota"/>
</dbReference>
<dbReference type="HOGENOM" id="CLU_001570_27_2_1"/>
<dbReference type="InParanoid" id="P48422"/>
<dbReference type="OMA" id="VPEHYEH"/>
<dbReference type="OrthoDB" id="1470350at2759"/>
<dbReference type="PhylomeDB" id="P48422"/>
<dbReference type="BioCyc" id="ARA:AT5G58860-MONOMER"/>
<dbReference type="BioCyc" id="MetaCyc:AT5G58860-MONOMER"/>
<dbReference type="BRENDA" id="1.14.14.80">
    <property type="organism ID" value="399"/>
</dbReference>
<dbReference type="BRENDA" id="1.14.15.3">
    <property type="organism ID" value="399"/>
</dbReference>
<dbReference type="PRO" id="PR:P48422"/>
<dbReference type="Proteomes" id="UP000006548">
    <property type="component" value="Chromosome 5"/>
</dbReference>
<dbReference type="ExpressionAtlas" id="P48422">
    <property type="expression patterns" value="baseline and differential"/>
</dbReference>
<dbReference type="GO" id="GO:0016020">
    <property type="term" value="C:membrane"/>
    <property type="evidence" value="ECO:0007669"/>
    <property type="project" value="UniProtKB-SubCell"/>
</dbReference>
<dbReference type="GO" id="GO:0000325">
    <property type="term" value="C:plant-type vacuole"/>
    <property type="evidence" value="ECO:0007005"/>
    <property type="project" value="TAIR"/>
</dbReference>
<dbReference type="GO" id="GO:0018685">
    <property type="term" value="F:alkane 1-monooxygenase activity"/>
    <property type="evidence" value="ECO:0000314"/>
    <property type="project" value="TAIR"/>
</dbReference>
<dbReference type="GO" id="GO:0020037">
    <property type="term" value="F:heme binding"/>
    <property type="evidence" value="ECO:0007669"/>
    <property type="project" value="InterPro"/>
</dbReference>
<dbReference type="GO" id="GO:0005506">
    <property type="term" value="F:iron ion binding"/>
    <property type="evidence" value="ECO:0007669"/>
    <property type="project" value="InterPro"/>
</dbReference>
<dbReference type="GO" id="GO:0102033">
    <property type="term" value="F:long-chain fatty acid omega-hydroxylase activity"/>
    <property type="evidence" value="ECO:0007669"/>
    <property type="project" value="UniProtKB-EC"/>
</dbReference>
<dbReference type="GO" id="GO:0006631">
    <property type="term" value="P:fatty acid metabolic process"/>
    <property type="evidence" value="ECO:0000314"/>
    <property type="project" value="TAIR"/>
</dbReference>
<dbReference type="GO" id="GO:0010345">
    <property type="term" value="P:suberin biosynthetic process"/>
    <property type="evidence" value="ECO:0000315"/>
    <property type="project" value="TAIR"/>
</dbReference>
<dbReference type="CDD" id="cd11064">
    <property type="entry name" value="CYP86A"/>
    <property type="match status" value="1"/>
</dbReference>
<dbReference type="FunFam" id="1.10.630.10:FF:000044">
    <property type="entry name" value="Cytochrome P450"/>
    <property type="match status" value="1"/>
</dbReference>
<dbReference type="Gene3D" id="1.10.630.10">
    <property type="entry name" value="Cytochrome P450"/>
    <property type="match status" value="1"/>
</dbReference>
<dbReference type="InterPro" id="IPR001128">
    <property type="entry name" value="Cyt_P450"/>
</dbReference>
<dbReference type="InterPro" id="IPR017972">
    <property type="entry name" value="Cyt_P450_CS"/>
</dbReference>
<dbReference type="InterPro" id="IPR002401">
    <property type="entry name" value="Cyt_P450_E_grp-I"/>
</dbReference>
<dbReference type="InterPro" id="IPR036396">
    <property type="entry name" value="Cyt_P450_sf"/>
</dbReference>
<dbReference type="PANTHER" id="PTHR24296">
    <property type="entry name" value="CYTOCHROME P450"/>
    <property type="match status" value="1"/>
</dbReference>
<dbReference type="Pfam" id="PF00067">
    <property type="entry name" value="p450"/>
    <property type="match status" value="1"/>
</dbReference>
<dbReference type="PRINTS" id="PR00463">
    <property type="entry name" value="EP450I"/>
</dbReference>
<dbReference type="PRINTS" id="PR00385">
    <property type="entry name" value="P450"/>
</dbReference>
<dbReference type="SUPFAM" id="SSF48264">
    <property type="entry name" value="Cytochrome P450"/>
    <property type="match status" value="1"/>
</dbReference>
<dbReference type="PROSITE" id="PS00086">
    <property type="entry name" value="CYTOCHROME_P450"/>
    <property type="match status" value="1"/>
</dbReference>
<name>C86A1_ARATH</name>
<protein>
    <recommendedName>
        <fullName>Cytochrome P450 86A1</fullName>
        <ecNumber evidence="5">1.14.14.80</ecNumber>
    </recommendedName>
    <alternativeName>
        <fullName>CYPLXXXVI</fullName>
    </alternativeName>
    <alternativeName>
        <fullName>P450-dependent fatty acid omega-hydroxylase</fullName>
    </alternativeName>
    <alternativeName>
        <fullName>Protein HYDROXYLASE OF ROOT SUBERIZED TISSUE</fullName>
    </alternativeName>
</protein>
<reference key="1">
    <citation type="online journal article" date="1995" name="Plant Gene Register">
        <title>Cloning, sequencing and expression of CYP86, a new cytochrome P450 from Arabidopsis thaliana.</title>
        <authorList>
            <person name="Benveniste I."/>
            <person name="Durst F."/>
        </authorList>
        <locator>PGR95-074</locator>
    </citation>
    <scope>NUCLEOTIDE SEQUENCE [MRNA]</scope>
    <source>
        <strain>cv. Columbia</strain>
    </source>
</reference>
<reference key="2">
    <citation type="journal article" date="1998" name="Biochem. Biophys. Res. Commun.">
        <title>CYP86A1 from Arabidopsis thaliana encodes a cytochrome P450-dependent fatty acid omega-hydroxylase.</title>
        <authorList>
            <person name="Benveniste I."/>
            <person name="Tijet N."/>
            <person name="Adas F."/>
            <person name="Philipps G."/>
            <person name="Salaun J.P."/>
            <person name="Durst F."/>
        </authorList>
    </citation>
    <scope>NUCLEOTIDE SEQUENCE [MRNA]</scope>
    <scope>FUNCTION</scope>
    <scope>CATALYTIC ACTIVITY</scope>
    <scope>CHARACTERIZATION</scope>
</reference>
<reference key="3">
    <citation type="journal article" date="1998" name="DNA Res.">
        <title>Structural analysis of Arabidopsis thaliana chromosome 5. VIII. Sequence features of the regions of 1,081,958 bp covered by seventeen physically assigned P1 and TAC clones.</title>
        <authorList>
            <person name="Asamizu E."/>
            <person name="Sato S."/>
            <person name="Kaneko T."/>
            <person name="Nakamura Y."/>
            <person name="Kotani H."/>
            <person name="Miyajima N."/>
            <person name="Tabata S."/>
        </authorList>
    </citation>
    <scope>NUCLEOTIDE SEQUENCE [LARGE SCALE GENOMIC DNA]</scope>
    <source>
        <strain>cv. Columbia</strain>
    </source>
</reference>
<reference key="4">
    <citation type="journal article" date="2017" name="Plant J.">
        <title>Araport11: a complete reannotation of the Arabidopsis thaliana reference genome.</title>
        <authorList>
            <person name="Cheng C.Y."/>
            <person name="Krishnakumar V."/>
            <person name="Chan A.P."/>
            <person name="Thibaud-Nissen F."/>
            <person name="Schobel S."/>
            <person name="Town C.D."/>
        </authorList>
    </citation>
    <scope>GENOME REANNOTATION</scope>
    <source>
        <strain>cv. Columbia</strain>
    </source>
</reference>
<reference key="5">
    <citation type="journal article" date="2003" name="Science">
        <title>Empirical analysis of transcriptional activity in the Arabidopsis genome.</title>
        <authorList>
            <person name="Yamada K."/>
            <person name="Lim J."/>
            <person name="Dale J.M."/>
            <person name="Chen H."/>
            <person name="Shinn P."/>
            <person name="Palm C.J."/>
            <person name="Southwick A.M."/>
            <person name="Wu H.C."/>
            <person name="Kim C.J."/>
            <person name="Nguyen M."/>
            <person name="Pham P.K."/>
            <person name="Cheuk R.F."/>
            <person name="Karlin-Newmann G."/>
            <person name="Liu S.X."/>
            <person name="Lam B."/>
            <person name="Sakano H."/>
            <person name="Wu T."/>
            <person name="Yu G."/>
            <person name="Miranda M."/>
            <person name="Quach H.L."/>
            <person name="Tripp M."/>
            <person name="Chang C.H."/>
            <person name="Lee J.M."/>
            <person name="Toriumi M.J."/>
            <person name="Chan M.M."/>
            <person name="Tang C.C."/>
            <person name="Onodera C.S."/>
            <person name="Deng J.M."/>
            <person name="Akiyama K."/>
            <person name="Ansari Y."/>
            <person name="Arakawa T."/>
            <person name="Banh J."/>
            <person name="Banno F."/>
            <person name="Bowser L."/>
            <person name="Brooks S.Y."/>
            <person name="Carninci P."/>
            <person name="Chao Q."/>
            <person name="Choy N."/>
            <person name="Enju A."/>
            <person name="Goldsmith A.D."/>
            <person name="Gurjal M."/>
            <person name="Hansen N.F."/>
            <person name="Hayashizaki Y."/>
            <person name="Johnson-Hopson C."/>
            <person name="Hsuan V.W."/>
            <person name="Iida K."/>
            <person name="Karnes M."/>
            <person name="Khan S."/>
            <person name="Koesema E."/>
            <person name="Ishida J."/>
            <person name="Jiang P.X."/>
            <person name="Jones T."/>
            <person name="Kawai J."/>
            <person name="Kamiya A."/>
            <person name="Meyers C."/>
            <person name="Nakajima M."/>
            <person name="Narusaka M."/>
            <person name="Seki M."/>
            <person name="Sakurai T."/>
            <person name="Satou M."/>
            <person name="Tamse R."/>
            <person name="Vaysberg M."/>
            <person name="Wallender E.K."/>
            <person name="Wong C."/>
            <person name="Yamamura Y."/>
            <person name="Yuan S."/>
            <person name="Shinozaki K."/>
            <person name="Davis R.W."/>
            <person name="Theologis A."/>
            <person name="Ecker J.R."/>
        </authorList>
    </citation>
    <scope>NUCLEOTIDE SEQUENCE [LARGE SCALE MRNA]</scope>
    <source>
        <strain>cv. Columbia</strain>
    </source>
</reference>
<reference key="6">
    <citation type="journal article" date="2005" name="Plant Physiol.">
        <title>Differential expression and evolution of the Arabidopsis CYP86A subfamily.</title>
        <authorList>
            <person name="Duan H."/>
            <person name="Schuler M.A."/>
        </authorList>
    </citation>
    <scope>FUNCTION</scope>
    <scope>TISSUE SPECIFICITY</scope>
    <scope>INDUCTION</scope>
    <scope>GENE FAMILY</scope>
</reference>
<reference key="7">
    <citation type="journal article" date="2007" name="Proteins">
        <title>Molecular definitions of fatty acid hydroxylases in Arabidopsis thaliana.</title>
        <authorList>
            <person name="Rupasinghe S.G."/>
            <person name="Duan H."/>
            <person name="Schuler M.A."/>
        </authorList>
    </citation>
    <scope>FUNCTION</scope>
</reference>
<evidence type="ECO:0000250" key="1"/>
<evidence type="ECO:0000255" key="2"/>
<evidence type="ECO:0000269" key="3">
    <source>
    </source>
</evidence>
<evidence type="ECO:0000269" key="4">
    <source>
    </source>
</evidence>
<evidence type="ECO:0000269" key="5">
    <source>
    </source>
</evidence>
<evidence type="ECO:0000305" key="6"/>